<gene>
    <name evidence="1" type="primary">rpsD</name>
    <name type="ordered locus">ABC2757</name>
</gene>
<proteinExistence type="inferred from homology"/>
<sequence>MSRYTGPSWKLSRRLGVSLSGTGKELAKRPYAPGQHGPNQRKKLSEYALQLHEKQKLRHMYGVNERQFLRTFNDAGKMNGIHGENFMILLESRLDNLVYRMGLARTRRAARQLVNHGHVLVDGSRVDIPSYRVKPGQTIGLRERSRNLTVVKEALDVNDFTPGYVSFDEEKLEGTYTRYPERSELPAEITEALIVEWYSR</sequence>
<organism>
    <name type="scientific">Shouchella clausii (strain KSM-K16)</name>
    <name type="common">Alkalihalobacillus clausii</name>
    <dbReference type="NCBI Taxonomy" id="66692"/>
    <lineage>
        <taxon>Bacteria</taxon>
        <taxon>Bacillati</taxon>
        <taxon>Bacillota</taxon>
        <taxon>Bacilli</taxon>
        <taxon>Bacillales</taxon>
        <taxon>Bacillaceae</taxon>
        <taxon>Shouchella</taxon>
    </lineage>
</organism>
<dbReference type="EMBL" id="AP006627">
    <property type="protein sequence ID" value="BAD65291.1"/>
    <property type="molecule type" value="Genomic_DNA"/>
</dbReference>
<dbReference type="RefSeq" id="WP_011247599.1">
    <property type="nucleotide sequence ID" value="NC_006582.1"/>
</dbReference>
<dbReference type="SMR" id="Q5WEB9"/>
<dbReference type="STRING" id="66692.ABC2757"/>
<dbReference type="KEGG" id="bcl:ABC2757"/>
<dbReference type="eggNOG" id="COG0522">
    <property type="taxonomic scope" value="Bacteria"/>
</dbReference>
<dbReference type="HOGENOM" id="CLU_092403_0_1_9"/>
<dbReference type="OrthoDB" id="9803672at2"/>
<dbReference type="Proteomes" id="UP000001168">
    <property type="component" value="Chromosome"/>
</dbReference>
<dbReference type="GO" id="GO:0015935">
    <property type="term" value="C:small ribosomal subunit"/>
    <property type="evidence" value="ECO:0007669"/>
    <property type="project" value="InterPro"/>
</dbReference>
<dbReference type="GO" id="GO:0019843">
    <property type="term" value="F:rRNA binding"/>
    <property type="evidence" value="ECO:0007669"/>
    <property type="project" value="UniProtKB-UniRule"/>
</dbReference>
<dbReference type="GO" id="GO:0003735">
    <property type="term" value="F:structural constituent of ribosome"/>
    <property type="evidence" value="ECO:0007669"/>
    <property type="project" value="InterPro"/>
</dbReference>
<dbReference type="GO" id="GO:0042274">
    <property type="term" value="P:ribosomal small subunit biogenesis"/>
    <property type="evidence" value="ECO:0007669"/>
    <property type="project" value="TreeGrafter"/>
</dbReference>
<dbReference type="GO" id="GO:0006412">
    <property type="term" value="P:translation"/>
    <property type="evidence" value="ECO:0007669"/>
    <property type="project" value="UniProtKB-UniRule"/>
</dbReference>
<dbReference type="CDD" id="cd00165">
    <property type="entry name" value="S4"/>
    <property type="match status" value="1"/>
</dbReference>
<dbReference type="FunFam" id="1.10.1050.10:FF:000001">
    <property type="entry name" value="30S ribosomal protein S4"/>
    <property type="match status" value="1"/>
</dbReference>
<dbReference type="FunFam" id="3.10.290.10:FF:000001">
    <property type="entry name" value="30S ribosomal protein S4"/>
    <property type="match status" value="1"/>
</dbReference>
<dbReference type="Gene3D" id="1.10.1050.10">
    <property type="entry name" value="Ribosomal Protein S4 Delta 41, Chain A, domain 1"/>
    <property type="match status" value="1"/>
</dbReference>
<dbReference type="Gene3D" id="3.10.290.10">
    <property type="entry name" value="RNA-binding S4 domain"/>
    <property type="match status" value="1"/>
</dbReference>
<dbReference type="HAMAP" id="MF_01306_B">
    <property type="entry name" value="Ribosomal_uS4_B"/>
    <property type="match status" value="1"/>
</dbReference>
<dbReference type="InterPro" id="IPR022801">
    <property type="entry name" value="Ribosomal_uS4"/>
</dbReference>
<dbReference type="InterPro" id="IPR005709">
    <property type="entry name" value="Ribosomal_uS4_bac-type"/>
</dbReference>
<dbReference type="InterPro" id="IPR018079">
    <property type="entry name" value="Ribosomal_uS4_CS"/>
</dbReference>
<dbReference type="InterPro" id="IPR001912">
    <property type="entry name" value="Ribosomal_uS4_N"/>
</dbReference>
<dbReference type="InterPro" id="IPR002942">
    <property type="entry name" value="S4_RNA-bd"/>
</dbReference>
<dbReference type="InterPro" id="IPR036986">
    <property type="entry name" value="S4_RNA-bd_sf"/>
</dbReference>
<dbReference type="NCBIfam" id="NF003717">
    <property type="entry name" value="PRK05327.1"/>
    <property type="match status" value="1"/>
</dbReference>
<dbReference type="NCBIfam" id="TIGR01017">
    <property type="entry name" value="rpsD_bact"/>
    <property type="match status" value="1"/>
</dbReference>
<dbReference type="PANTHER" id="PTHR11831">
    <property type="entry name" value="30S 40S RIBOSOMAL PROTEIN"/>
    <property type="match status" value="1"/>
</dbReference>
<dbReference type="PANTHER" id="PTHR11831:SF4">
    <property type="entry name" value="SMALL RIBOSOMAL SUBUNIT PROTEIN US4M"/>
    <property type="match status" value="1"/>
</dbReference>
<dbReference type="Pfam" id="PF00163">
    <property type="entry name" value="Ribosomal_S4"/>
    <property type="match status" value="1"/>
</dbReference>
<dbReference type="Pfam" id="PF01479">
    <property type="entry name" value="S4"/>
    <property type="match status" value="1"/>
</dbReference>
<dbReference type="SMART" id="SM01390">
    <property type="entry name" value="Ribosomal_S4"/>
    <property type="match status" value="1"/>
</dbReference>
<dbReference type="SMART" id="SM00363">
    <property type="entry name" value="S4"/>
    <property type="match status" value="1"/>
</dbReference>
<dbReference type="SUPFAM" id="SSF55174">
    <property type="entry name" value="Alpha-L RNA-binding motif"/>
    <property type="match status" value="1"/>
</dbReference>
<dbReference type="PROSITE" id="PS00632">
    <property type="entry name" value="RIBOSOMAL_S4"/>
    <property type="match status" value="1"/>
</dbReference>
<dbReference type="PROSITE" id="PS50889">
    <property type="entry name" value="S4"/>
    <property type="match status" value="1"/>
</dbReference>
<feature type="chain" id="PRO_0000132337" description="Small ribosomal subunit protein uS4">
    <location>
        <begin position="1"/>
        <end position="200"/>
    </location>
</feature>
<feature type="domain" description="S4 RNA-binding" evidence="1">
    <location>
        <begin position="92"/>
        <end position="155"/>
    </location>
</feature>
<keyword id="KW-1185">Reference proteome</keyword>
<keyword id="KW-0687">Ribonucleoprotein</keyword>
<keyword id="KW-0689">Ribosomal protein</keyword>
<keyword id="KW-0694">RNA-binding</keyword>
<keyword id="KW-0699">rRNA-binding</keyword>
<accession>Q5WEB9</accession>
<evidence type="ECO:0000255" key="1">
    <source>
        <dbReference type="HAMAP-Rule" id="MF_01306"/>
    </source>
</evidence>
<evidence type="ECO:0000305" key="2"/>
<comment type="function">
    <text evidence="1">One of the primary rRNA binding proteins, it binds directly to 16S rRNA where it nucleates assembly of the body of the 30S subunit.</text>
</comment>
<comment type="function">
    <text evidence="1">With S5 and S12 plays an important role in translational accuracy.</text>
</comment>
<comment type="subunit">
    <text evidence="1">Part of the 30S ribosomal subunit. Contacts protein S5. The interaction surface between S4 and S5 is involved in control of translational fidelity.</text>
</comment>
<comment type="similarity">
    <text evidence="1">Belongs to the universal ribosomal protein uS4 family.</text>
</comment>
<protein>
    <recommendedName>
        <fullName evidence="1">Small ribosomal subunit protein uS4</fullName>
    </recommendedName>
    <alternativeName>
        <fullName evidence="2">30S ribosomal protein S4</fullName>
    </alternativeName>
</protein>
<reference key="1">
    <citation type="submission" date="2003-10" db="EMBL/GenBank/DDBJ databases">
        <title>The complete genome sequence of the alkaliphilic Bacillus clausii KSM-K16.</title>
        <authorList>
            <person name="Takaki Y."/>
            <person name="Kageyama Y."/>
            <person name="Shimamura S."/>
            <person name="Suzuki H."/>
            <person name="Nishi S."/>
            <person name="Hatada Y."/>
            <person name="Kawai S."/>
            <person name="Ito S."/>
            <person name="Horikoshi K."/>
        </authorList>
    </citation>
    <scope>NUCLEOTIDE SEQUENCE [LARGE SCALE GENOMIC DNA]</scope>
    <source>
        <strain>KSM-K16</strain>
    </source>
</reference>
<name>RS4_SHOC1</name>